<evidence type="ECO:0000255" key="1">
    <source>
        <dbReference type="HAMAP-Rule" id="MF_00514"/>
    </source>
</evidence>
<evidence type="ECO:0000305" key="2"/>
<accession>A5G2N0</accession>
<feature type="chain" id="PRO_1000050647" description="Large ribosomal subunit protein bL35">
    <location>
        <begin position="1"/>
        <end position="67"/>
    </location>
</feature>
<sequence length="67" mass="7556">MPKMKTKSSVKKRFKITATGKVMAGHGNKRHGLINRSQKMKRTNRGTMALPEQDGKTVKQWAPYGLD</sequence>
<comment type="similarity">
    <text evidence="1">Belongs to the bacterial ribosomal protein bL35 family.</text>
</comment>
<dbReference type="EMBL" id="CP000697">
    <property type="protein sequence ID" value="ABQ32112.1"/>
    <property type="molecule type" value="Genomic_DNA"/>
</dbReference>
<dbReference type="RefSeq" id="WP_012040415.1">
    <property type="nucleotide sequence ID" value="NC_009484.1"/>
</dbReference>
<dbReference type="SMR" id="A5G2N0"/>
<dbReference type="STRING" id="349163.Acry_2922"/>
<dbReference type="KEGG" id="acr:Acry_2922"/>
<dbReference type="eggNOG" id="COG0291">
    <property type="taxonomic scope" value="Bacteria"/>
</dbReference>
<dbReference type="HOGENOM" id="CLU_169643_2_1_5"/>
<dbReference type="Proteomes" id="UP000000245">
    <property type="component" value="Chromosome"/>
</dbReference>
<dbReference type="GO" id="GO:0022625">
    <property type="term" value="C:cytosolic large ribosomal subunit"/>
    <property type="evidence" value="ECO:0007669"/>
    <property type="project" value="TreeGrafter"/>
</dbReference>
<dbReference type="GO" id="GO:0003735">
    <property type="term" value="F:structural constituent of ribosome"/>
    <property type="evidence" value="ECO:0007669"/>
    <property type="project" value="InterPro"/>
</dbReference>
<dbReference type="GO" id="GO:0006412">
    <property type="term" value="P:translation"/>
    <property type="evidence" value="ECO:0007669"/>
    <property type="project" value="UniProtKB-UniRule"/>
</dbReference>
<dbReference type="FunFam" id="4.10.410.60:FF:000001">
    <property type="entry name" value="50S ribosomal protein L35"/>
    <property type="match status" value="1"/>
</dbReference>
<dbReference type="Gene3D" id="4.10.410.60">
    <property type="match status" value="1"/>
</dbReference>
<dbReference type="HAMAP" id="MF_00514">
    <property type="entry name" value="Ribosomal_bL35"/>
    <property type="match status" value="1"/>
</dbReference>
<dbReference type="InterPro" id="IPR001706">
    <property type="entry name" value="Ribosomal_bL35"/>
</dbReference>
<dbReference type="InterPro" id="IPR021137">
    <property type="entry name" value="Ribosomal_bL35-like"/>
</dbReference>
<dbReference type="InterPro" id="IPR018265">
    <property type="entry name" value="Ribosomal_bL35_CS"/>
</dbReference>
<dbReference type="InterPro" id="IPR037229">
    <property type="entry name" value="Ribosomal_bL35_sf"/>
</dbReference>
<dbReference type="NCBIfam" id="TIGR00001">
    <property type="entry name" value="rpmI_bact"/>
    <property type="match status" value="1"/>
</dbReference>
<dbReference type="PANTHER" id="PTHR33343">
    <property type="entry name" value="54S RIBOSOMAL PROTEIN BL35M"/>
    <property type="match status" value="1"/>
</dbReference>
<dbReference type="PANTHER" id="PTHR33343:SF1">
    <property type="entry name" value="LARGE RIBOSOMAL SUBUNIT PROTEIN BL35M"/>
    <property type="match status" value="1"/>
</dbReference>
<dbReference type="Pfam" id="PF01632">
    <property type="entry name" value="Ribosomal_L35p"/>
    <property type="match status" value="1"/>
</dbReference>
<dbReference type="PRINTS" id="PR00064">
    <property type="entry name" value="RIBOSOMALL35"/>
</dbReference>
<dbReference type="SUPFAM" id="SSF143034">
    <property type="entry name" value="L35p-like"/>
    <property type="match status" value="1"/>
</dbReference>
<dbReference type="PROSITE" id="PS00936">
    <property type="entry name" value="RIBOSOMAL_L35"/>
    <property type="match status" value="1"/>
</dbReference>
<organism>
    <name type="scientific">Acidiphilium cryptum (strain JF-5)</name>
    <dbReference type="NCBI Taxonomy" id="349163"/>
    <lineage>
        <taxon>Bacteria</taxon>
        <taxon>Pseudomonadati</taxon>
        <taxon>Pseudomonadota</taxon>
        <taxon>Alphaproteobacteria</taxon>
        <taxon>Acetobacterales</taxon>
        <taxon>Acidocellaceae</taxon>
        <taxon>Acidiphilium</taxon>
    </lineage>
</organism>
<proteinExistence type="inferred from homology"/>
<reference key="1">
    <citation type="submission" date="2007-05" db="EMBL/GenBank/DDBJ databases">
        <title>Complete sequence of chromosome of Acidiphilium cryptum JF-5.</title>
        <authorList>
            <consortium name="US DOE Joint Genome Institute"/>
            <person name="Copeland A."/>
            <person name="Lucas S."/>
            <person name="Lapidus A."/>
            <person name="Barry K."/>
            <person name="Detter J.C."/>
            <person name="Glavina del Rio T."/>
            <person name="Hammon N."/>
            <person name="Israni S."/>
            <person name="Dalin E."/>
            <person name="Tice H."/>
            <person name="Pitluck S."/>
            <person name="Sims D."/>
            <person name="Brettin T."/>
            <person name="Bruce D."/>
            <person name="Han C."/>
            <person name="Schmutz J."/>
            <person name="Larimer F."/>
            <person name="Land M."/>
            <person name="Hauser L."/>
            <person name="Kyrpides N."/>
            <person name="Kim E."/>
            <person name="Magnuson T."/>
            <person name="Richardson P."/>
        </authorList>
    </citation>
    <scope>NUCLEOTIDE SEQUENCE [LARGE SCALE GENOMIC DNA]</scope>
    <source>
        <strain>JF-5</strain>
    </source>
</reference>
<protein>
    <recommendedName>
        <fullName evidence="1">Large ribosomal subunit protein bL35</fullName>
    </recommendedName>
    <alternativeName>
        <fullName evidence="2">50S ribosomal protein L35</fullName>
    </alternativeName>
</protein>
<name>RL35_ACICJ</name>
<keyword id="KW-1185">Reference proteome</keyword>
<keyword id="KW-0687">Ribonucleoprotein</keyword>
<keyword id="KW-0689">Ribosomal protein</keyword>
<gene>
    <name evidence="1" type="primary">rpmI</name>
    <name type="ordered locus">Acry_2922</name>
</gene>